<organism>
    <name type="scientific">Rickettsia akari (strain Hartford)</name>
    <dbReference type="NCBI Taxonomy" id="293614"/>
    <lineage>
        <taxon>Bacteria</taxon>
        <taxon>Pseudomonadati</taxon>
        <taxon>Pseudomonadota</taxon>
        <taxon>Alphaproteobacteria</taxon>
        <taxon>Rickettsiales</taxon>
        <taxon>Rickettsiaceae</taxon>
        <taxon>Rickettsieae</taxon>
        <taxon>Rickettsia</taxon>
        <taxon>spotted fever group</taxon>
    </lineage>
</organism>
<accession>A8GM32</accession>
<sequence>MSNISSVNIKELLDAGVHFGHKTSRWNPKMASYIYGERDDVHIIDLRQSAALMSVALNAIYETVKKDGKVLFVSTKIQASDIIAEYAEKCGQYYVNHRWLGGMLTNWKTIAGSIEKLNKLEKTLENAEALIGYTKKEILDMSRKKEKLLLSLAGIRNLNSKPDLLVVIDTNKEHIAINEAVKLNVPIVAVVDTNSNPDNVDYPIPGNDDSIRSIRLYCRLFADAALQGLEESMKASGVDMGAMHEHTDNALISKNVSKLKQAKKFSKTKNIDEETNTEFEQALNDTDENKNADNA</sequence>
<proteinExistence type="inferred from homology"/>
<keyword id="KW-0687">Ribonucleoprotein</keyword>
<keyword id="KW-0689">Ribosomal protein</keyword>
<gene>
    <name evidence="1" type="primary">rpsB</name>
    <name type="ordered locus">A1C_00620</name>
</gene>
<reference key="1">
    <citation type="submission" date="2007-09" db="EMBL/GenBank/DDBJ databases">
        <title>Complete genome sequence of Rickettsia akari.</title>
        <authorList>
            <person name="Madan A."/>
            <person name="Fahey J."/>
            <person name="Helton E."/>
            <person name="Ketteman M."/>
            <person name="Madan A."/>
            <person name="Rodrigues S."/>
            <person name="Sanchez A."/>
            <person name="Whiting M."/>
            <person name="Dasch G."/>
            <person name="Eremeeva M."/>
        </authorList>
    </citation>
    <scope>NUCLEOTIDE SEQUENCE [LARGE SCALE GENOMIC DNA]</scope>
    <source>
        <strain>Hartford</strain>
    </source>
</reference>
<comment type="similarity">
    <text evidence="1">Belongs to the universal ribosomal protein uS2 family.</text>
</comment>
<protein>
    <recommendedName>
        <fullName evidence="1">Small ribosomal subunit protein uS2</fullName>
    </recommendedName>
    <alternativeName>
        <fullName evidence="3">30S ribosomal protein S2</fullName>
    </alternativeName>
</protein>
<name>RS2_RICAH</name>
<dbReference type="EMBL" id="CP000847">
    <property type="protein sequence ID" value="ABV74457.1"/>
    <property type="molecule type" value="Genomic_DNA"/>
</dbReference>
<dbReference type="RefSeq" id="WP_012013327.1">
    <property type="nucleotide sequence ID" value="NC_009881.1"/>
</dbReference>
<dbReference type="SMR" id="A8GM32"/>
<dbReference type="STRING" id="293614.A1C_00620"/>
<dbReference type="KEGG" id="rak:A1C_00620"/>
<dbReference type="eggNOG" id="COG0052">
    <property type="taxonomic scope" value="Bacteria"/>
</dbReference>
<dbReference type="HOGENOM" id="CLU_040318_2_1_5"/>
<dbReference type="Proteomes" id="UP000006830">
    <property type="component" value="Chromosome"/>
</dbReference>
<dbReference type="GO" id="GO:0015935">
    <property type="term" value="C:small ribosomal subunit"/>
    <property type="evidence" value="ECO:0007669"/>
    <property type="project" value="InterPro"/>
</dbReference>
<dbReference type="GO" id="GO:0003735">
    <property type="term" value="F:structural constituent of ribosome"/>
    <property type="evidence" value="ECO:0007669"/>
    <property type="project" value="InterPro"/>
</dbReference>
<dbReference type="GO" id="GO:0006412">
    <property type="term" value="P:translation"/>
    <property type="evidence" value="ECO:0007669"/>
    <property type="project" value="UniProtKB-UniRule"/>
</dbReference>
<dbReference type="CDD" id="cd01425">
    <property type="entry name" value="RPS2"/>
    <property type="match status" value="1"/>
</dbReference>
<dbReference type="Gene3D" id="3.40.50.10490">
    <property type="entry name" value="Glucose-6-phosphate isomerase like protein, domain 1"/>
    <property type="match status" value="1"/>
</dbReference>
<dbReference type="Gene3D" id="1.10.287.610">
    <property type="entry name" value="Helix hairpin bin"/>
    <property type="match status" value="1"/>
</dbReference>
<dbReference type="HAMAP" id="MF_00291_B">
    <property type="entry name" value="Ribosomal_uS2_B"/>
    <property type="match status" value="1"/>
</dbReference>
<dbReference type="InterPro" id="IPR001865">
    <property type="entry name" value="Ribosomal_uS2"/>
</dbReference>
<dbReference type="InterPro" id="IPR005706">
    <property type="entry name" value="Ribosomal_uS2_bac/mit/plastid"/>
</dbReference>
<dbReference type="InterPro" id="IPR018130">
    <property type="entry name" value="Ribosomal_uS2_CS"/>
</dbReference>
<dbReference type="InterPro" id="IPR023591">
    <property type="entry name" value="Ribosomal_uS2_flav_dom_sf"/>
</dbReference>
<dbReference type="NCBIfam" id="TIGR01011">
    <property type="entry name" value="rpsB_bact"/>
    <property type="match status" value="1"/>
</dbReference>
<dbReference type="PANTHER" id="PTHR12534">
    <property type="entry name" value="30S RIBOSOMAL PROTEIN S2 PROKARYOTIC AND ORGANELLAR"/>
    <property type="match status" value="1"/>
</dbReference>
<dbReference type="PANTHER" id="PTHR12534:SF0">
    <property type="entry name" value="SMALL RIBOSOMAL SUBUNIT PROTEIN US2M"/>
    <property type="match status" value="1"/>
</dbReference>
<dbReference type="Pfam" id="PF00318">
    <property type="entry name" value="Ribosomal_S2"/>
    <property type="match status" value="1"/>
</dbReference>
<dbReference type="PRINTS" id="PR00395">
    <property type="entry name" value="RIBOSOMALS2"/>
</dbReference>
<dbReference type="SUPFAM" id="SSF52313">
    <property type="entry name" value="Ribosomal protein S2"/>
    <property type="match status" value="1"/>
</dbReference>
<dbReference type="PROSITE" id="PS00962">
    <property type="entry name" value="RIBOSOMAL_S2_1"/>
    <property type="match status" value="1"/>
</dbReference>
<dbReference type="PROSITE" id="PS00963">
    <property type="entry name" value="RIBOSOMAL_S2_2"/>
    <property type="match status" value="1"/>
</dbReference>
<feature type="chain" id="PRO_1000004053" description="Small ribosomal subunit protein uS2">
    <location>
        <begin position="1"/>
        <end position="295"/>
    </location>
</feature>
<feature type="region of interest" description="Disordered" evidence="2">
    <location>
        <begin position="264"/>
        <end position="295"/>
    </location>
</feature>
<evidence type="ECO:0000255" key="1">
    <source>
        <dbReference type="HAMAP-Rule" id="MF_00291"/>
    </source>
</evidence>
<evidence type="ECO:0000256" key="2">
    <source>
        <dbReference type="SAM" id="MobiDB-lite"/>
    </source>
</evidence>
<evidence type="ECO:0000305" key="3"/>